<gene>
    <name type="primary">MAD1</name>
    <name type="ordered locus">CAGL0H03179g</name>
</gene>
<accession>Q6FS63</accession>
<reference key="1">
    <citation type="journal article" date="2004" name="Nature">
        <title>Genome evolution in yeasts.</title>
        <authorList>
            <person name="Dujon B."/>
            <person name="Sherman D."/>
            <person name="Fischer G."/>
            <person name="Durrens P."/>
            <person name="Casaregola S."/>
            <person name="Lafontaine I."/>
            <person name="de Montigny J."/>
            <person name="Marck C."/>
            <person name="Neuveglise C."/>
            <person name="Talla E."/>
            <person name="Goffard N."/>
            <person name="Frangeul L."/>
            <person name="Aigle M."/>
            <person name="Anthouard V."/>
            <person name="Babour A."/>
            <person name="Barbe V."/>
            <person name="Barnay S."/>
            <person name="Blanchin S."/>
            <person name="Beckerich J.-M."/>
            <person name="Beyne E."/>
            <person name="Bleykasten C."/>
            <person name="Boisrame A."/>
            <person name="Boyer J."/>
            <person name="Cattolico L."/>
            <person name="Confanioleri F."/>
            <person name="de Daruvar A."/>
            <person name="Despons L."/>
            <person name="Fabre E."/>
            <person name="Fairhead C."/>
            <person name="Ferry-Dumazet H."/>
            <person name="Groppi A."/>
            <person name="Hantraye F."/>
            <person name="Hennequin C."/>
            <person name="Jauniaux N."/>
            <person name="Joyet P."/>
            <person name="Kachouri R."/>
            <person name="Kerrest A."/>
            <person name="Koszul R."/>
            <person name="Lemaire M."/>
            <person name="Lesur I."/>
            <person name="Ma L."/>
            <person name="Muller H."/>
            <person name="Nicaud J.-M."/>
            <person name="Nikolski M."/>
            <person name="Oztas S."/>
            <person name="Ozier-Kalogeropoulos O."/>
            <person name="Pellenz S."/>
            <person name="Potier S."/>
            <person name="Richard G.-F."/>
            <person name="Straub M.-L."/>
            <person name="Suleau A."/>
            <person name="Swennen D."/>
            <person name="Tekaia F."/>
            <person name="Wesolowski-Louvel M."/>
            <person name="Westhof E."/>
            <person name="Wirth B."/>
            <person name="Zeniou-Meyer M."/>
            <person name="Zivanovic Y."/>
            <person name="Bolotin-Fukuhara M."/>
            <person name="Thierry A."/>
            <person name="Bouchier C."/>
            <person name="Caudron B."/>
            <person name="Scarpelli C."/>
            <person name="Gaillardin C."/>
            <person name="Weissenbach J."/>
            <person name="Wincker P."/>
            <person name="Souciet J.-L."/>
        </authorList>
    </citation>
    <scope>NUCLEOTIDE SEQUENCE [LARGE SCALE GENOMIC DNA]</scope>
    <source>
        <strain>ATCC 2001 / BCRC 20586 / JCM 3761 / NBRC 0622 / NRRL Y-65 / CBS 138</strain>
    </source>
</reference>
<keyword id="KW-0131">Cell cycle</keyword>
<keyword id="KW-0132">Cell division</keyword>
<keyword id="KW-0175">Coiled coil</keyword>
<keyword id="KW-0498">Mitosis</keyword>
<keyword id="KW-0539">Nucleus</keyword>
<keyword id="KW-1185">Reference proteome</keyword>
<feature type="chain" id="PRO_0000213792" description="Spindle assembly checkpoint component MAD1">
    <location>
        <begin position="1"/>
        <end position="657"/>
    </location>
</feature>
<feature type="region of interest" description="Disordered" evidence="3">
    <location>
        <begin position="1"/>
        <end position="29"/>
    </location>
</feature>
<feature type="region of interest" description="Disordered" evidence="3">
    <location>
        <begin position="96"/>
        <end position="116"/>
    </location>
</feature>
<feature type="coiled-coil region" evidence="2">
    <location>
        <begin position="46"/>
        <end position="99"/>
    </location>
</feature>
<feature type="coiled-coil region" evidence="2">
    <location>
        <begin position="136"/>
        <end position="533"/>
    </location>
</feature>
<feature type="compositionally biased region" description="Basic and acidic residues" evidence="3">
    <location>
        <begin position="20"/>
        <end position="29"/>
    </location>
</feature>
<feature type="compositionally biased region" description="Polar residues" evidence="3">
    <location>
        <begin position="96"/>
        <end position="105"/>
    </location>
</feature>
<proteinExistence type="inferred from homology"/>
<name>MAD1_CANGA</name>
<evidence type="ECO:0000250" key="1"/>
<evidence type="ECO:0000255" key="2"/>
<evidence type="ECO:0000256" key="3">
    <source>
        <dbReference type="SAM" id="MobiDB-lite"/>
    </source>
</evidence>
<evidence type="ECO:0000305" key="4"/>
<organism>
    <name type="scientific">Candida glabrata (strain ATCC 2001 / BCRC 20586 / JCM 3761 / NBRC 0622 / NRRL Y-65 / CBS 138)</name>
    <name type="common">Yeast</name>
    <name type="synonym">Nakaseomyces glabratus</name>
    <dbReference type="NCBI Taxonomy" id="284593"/>
    <lineage>
        <taxon>Eukaryota</taxon>
        <taxon>Fungi</taxon>
        <taxon>Dikarya</taxon>
        <taxon>Ascomycota</taxon>
        <taxon>Saccharomycotina</taxon>
        <taxon>Saccharomycetes</taxon>
        <taxon>Saccharomycetales</taxon>
        <taxon>Saccharomycetaceae</taxon>
        <taxon>Nakaseomyces</taxon>
    </lineage>
</organism>
<dbReference type="EMBL" id="CR380954">
    <property type="protein sequence ID" value="CAG59864.1"/>
    <property type="molecule type" value="Genomic_DNA"/>
</dbReference>
<dbReference type="RefSeq" id="XP_446931.1">
    <property type="nucleotide sequence ID" value="XM_446931.1"/>
</dbReference>
<dbReference type="SMR" id="Q6FS63"/>
<dbReference type="FunCoup" id="Q6FS63">
    <property type="interactions" value="377"/>
</dbReference>
<dbReference type="STRING" id="284593.Q6FS63"/>
<dbReference type="EnsemblFungi" id="CAGL0H03179g-T">
    <property type="protein sequence ID" value="CAGL0H03179g-T-p1"/>
    <property type="gene ID" value="CAGL0H03179g"/>
</dbReference>
<dbReference type="KEGG" id="cgr:2888905"/>
<dbReference type="CGD" id="CAL0131566">
    <property type="gene designation" value="CAGL0H03179g"/>
</dbReference>
<dbReference type="VEuPathDB" id="FungiDB:CAGL0H03179g"/>
<dbReference type="eggNOG" id="KOG4593">
    <property type="taxonomic scope" value="Eukaryota"/>
</dbReference>
<dbReference type="HOGENOM" id="CLU_026595_0_0_1"/>
<dbReference type="InParanoid" id="Q6FS63"/>
<dbReference type="OMA" id="YKLDFMP"/>
<dbReference type="Proteomes" id="UP000002428">
    <property type="component" value="Chromosome H"/>
</dbReference>
<dbReference type="GO" id="GO:0000776">
    <property type="term" value="C:kinetochore"/>
    <property type="evidence" value="ECO:0007669"/>
    <property type="project" value="EnsemblFungi"/>
</dbReference>
<dbReference type="GO" id="GO:0072686">
    <property type="term" value="C:mitotic spindle"/>
    <property type="evidence" value="ECO:0007669"/>
    <property type="project" value="TreeGrafter"/>
</dbReference>
<dbReference type="GO" id="GO:0005635">
    <property type="term" value="C:nuclear envelope"/>
    <property type="evidence" value="ECO:0007669"/>
    <property type="project" value="TreeGrafter"/>
</dbReference>
<dbReference type="GO" id="GO:0090268">
    <property type="term" value="P:activation of mitotic cell cycle spindle assembly checkpoint"/>
    <property type="evidence" value="ECO:0007669"/>
    <property type="project" value="EnsemblFungi"/>
</dbReference>
<dbReference type="GO" id="GO:0051315">
    <property type="term" value="P:attachment of mitotic spindle microtubules to kinetochore"/>
    <property type="evidence" value="ECO:0007669"/>
    <property type="project" value="TreeGrafter"/>
</dbReference>
<dbReference type="GO" id="GO:0051301">
    <property type="term" value="P:cell division"/>
    <property type="evidence" value="ECO:0007669"/>
    <property type="project" value="UniProtKB-KW"/>
</dbReference>
<dbReference type="GO" id="GO:0044774">
    <property type="term" value="P:mitotic DNA integrity checkpoint signaling"/>
    <property type="evidence" value="ECO:0007669"/>
    <property type="project" value="EnsemblFungi"/>
</dbReference>
<dbReference type="GO" id="GO:0007094">
    <property type="term" value="P:mitotic spindle assembly checkpoint signaling"/>
    <property type="evidence" value="ECO:0007669"/>
    <property type="project" value="EnsemblFungi"/>
</dbReference>
<dbReference type="GO" id="GO:1901925">
    <property type="term" value="P:negative regulation of protein import into nucleus during spindle assembly checkpoint"/>
    <property type="evidence" value="ECO:0007669"/>
    <property type="project" value="EnsemblFungi"/>
</dbReference>
<dbReference type="GO" id="GO:0006913">
    <property type="term" value="P:nucleocytoplasmic transport"/>
    <property type="evidence" value="ECO:0007669"/>
    <property type="project" value="EnsemblFungi"/>
</dbReference>
<dbReference type="Gene3D" id="3.30.457.60">
    <property type="match status" value="1"/>
</dbReference>
<dbReference type="InterPro" id="IPR008672">
    <property type="entry name" value="Mad1"/>
</dbReference>
<dbReference type="PANTHER" id="PTHR23168:SF0">
    <property type="entry name" value="MITOTIC SPINDLE ASSEMBLY CHECKPOINT PROTEIN MAD1"/>
    <property type="match status" value="1"/>
</dbReference>
<dbReference type="PANTHER" id="PTHR23168">
    <property type="entry name" value="MITOTIC SPINDLE ASSEMBLY CHECKPOINT PROTEIN MAD1 MITOTIC ARREST DEFICIENT-LIKE PROTEIN 1"/>
    <property type="match status" value="1"/>
</dbReference>
<dbReference type="Pfam" id="PF05557">
    <property type="entry name" value="MAD"/>
    <property type="match status" value="1"/>
</dbReference>
<sequence>MNNSGSGGSSPFVESPDLVSDGHLHTERKDTPIDVDNWKYKYDNLLNQYEIEKVRWQKEQYDSEKSHEALHLQLEKARNEIDQLVESKRFLEAQLQSQHPQNTQKEWSHEDNKVNNNSMNNDYMLLEEKYKSDVFHLDNSVNELKLELTSCRSLLKKYEEVIEQQSEQIKEIKKTLKKKEQELDEIEVNRLKQAHNATNTEEIRQQTNENASFSNGYNTLMSMKNSVNYWKNENQQLNQKLSEYSDIYQQLQEAQLEIMELKANLEEWNKFLSNKKQQDNSNDYSIDHFIIEFESQRRELNMVTEELAEVKKSYYNSKILNDELALERNQLLKLKDDYENNIINLEKLNHELEQQKVLLEEECSLLKNQIPTKENLNQQIRSTNRNDAEYDSLLDNYKQETENLTNELKRLNDSLIEQNRNQGTEMKKRKLRNGDHININYSQRLNELQQNNLSLEKDNEKLRLVVEKLEGKLDDLRKTKPKNIRILQQRDSPLLKLQFVRRKENELLREENQNLLTMIENITENRNESFDKIPLTSYNSLKYQYEISMDTNKKQEKKFSRLKQIFNKKSLEFIDVVNSLLGFKLEFQQDGRVKIYSCYMPNKYLIANLVDNTLKSNLDTVISDWDSLLNDWVVEKGQLPCFLASLTLQLWKMENDS</sequence>
<protein>
    <recommendedName>
        <fullName>Spindle assembly checkpoint component MAD1</fullName>
    </recommendedName>
    <alternativeName>
        <fullName>Mitotic arrest deficient protein 1</fullName>
    </alternativeName>
</protein>
<comment type="function">
    <text>Central component of the spindle assembly checkpoint.</text>
</comment>
<comment type="subcellular location">
    <subcellularLocation>
        <location evidence="1">Nucleus</location>
    </subcellularLocation>
</comment>
<comment type="similarity">
    <text evidence="4">Belongs to the MAD1 family.</text>
</comment>